<proteinExistence type="inferred from homology"/>
<keyword id="KW-0030">Aminoacyl-tRNA synthetase</keyword>
<keyword id="KW-0067">ATP-binding</keyword>
<keyword id="KW-0963">Cytoplasm</keyword>
<keyword id="KW-0436">Ligase</keyword>
<keyword id="KW-0479">Metal-binding</keyword>
<keyword id="KW-0547">Nucleotide-binding</keyword>
<keyword id="KW-0648">Protein biosynthesis</keyword>
<keyword id="KW-1185">Reference proteome</keyword>
<keyword id="KW-0694">RNA-binding</keyword>
<keyword id="KW-0820">tRNA-binding</keyword>
<keyword id="KW-0862">Zinc</keyword>
<evidence type="ECO:0000255" key="1">
    <source>
        <dbReference type="HAMAP-Rule" id="MF_00184"/>
    </source>
</evidence>
<evidence type="ECO:0000255" key="2">
    <source>
        <dbReference type="PROSITE-ProRule" id="PRU01228"/>
    </source>
</evidence>
<comment type="function">
    <text evidence="1">Catalyzes the attachment of threonine to tRNA(Thr) in a two-step reaction: L-threonine is first activated by ATP to form Thr-AMP and then transferred to the acceptor end of tRNA(Thr). Also edits incorrectly charged L-seryl-tRNA(Thr).</text>
</comment>
<comment type="catalytic activity">
    <reaction evidence="1">
        <text>tRNA(Thr) + L-threonine + ATP = L-threonyl-tRNA(Thr) + AMP + diphosphate + H(+)</text>
        <dbReference type="Rhea" id="RHEA:24624"/>
        <dbReference type="Rhea" id="RHEA-COMP:9670"/>
        <dbReference type="Rhea" id="RHEA-COMP:9704"/>
        <dbReference type="ChEBI" id="CHEBI:15378"/>
        <dbReference type="ChEBI" id="CHEBI:30616"/>
        <dbReference type="ChEBI" id="CHEBI:33019"/>
        <dbReference type="ChEBI" id="CHEBI:57926"/>
        <dbReference type="ChEBI" id="CHEBI:78442"/>
        <dbReference type="ChEBI" id="CHEBI:78534"/>
        <dbReference type="ChEBI" id="CHEBI:456215"/>
        <dbReference type="EC" id="6.1.1.3"/>
    </reaction>
</comment>
<comment type="cofactor">
    <cofactor evidence="1">
        <name>Zn(2+)</name>
        <dbReference type="ChEBI" id="CHEBI:29105"/>
    </cofactor>
    <text evidence="1">Binds 1 zinc ion per subunit.</text>
</comment>
<comment type="subunit">
    <text evidence="1">Homodimer.</text>
</comment>
<comment type="subcellular location">
    <subcellularLocation>
        <location evidence="1">Cytoplasm</location>
    </subcellularLocation>
</comment>
<comment type="similarity">
    <text evidence="1">Belongs to the class-II aminoacyl-tRNA synthetase family.</text>
</comment>
<gene>
    <name evidence="1" type="primary">thrS</name>
    <name type="ordered locus">stu0572</name>
</gene>
<organism>
    <name type="scientific">Streptococcus thermophilus (strain ATCC BAA-250 / LMG 18311)</name>
    <dbReference type="NCBI Taxonomy" id="264199"/>
    <lineage>
        <taxon>Bacteria</taxon>
        <taxon>Bacillati</taxon>
        <taxon>Bacillota</taxon>
        <taxon>Bacilli</taxon>
        <taxon>Lactobacillales</taxon>
        <taxon>Streptococcaceae</taxon>
        <taxon>Streptococcus</taxon>
    </lineage>
</organism>
<sequence>MINITFPDGAVREFESGVTTFEIAQSISNSLAKKALAGKFNGKLIDTTRVITEDGSIEIVTPDHEDALPILRHSAAHLFAQAARRLFPDIHLGVGPAIEDGFYYDTDNQAGQISNEDLPRIEEEMKKIVKENFPSIREEVTKDEAREIFKNDPYKLELIEEHSEDDGGLTIYRQGEYVDLCRGPHVPSTGRIQIFHLLNVAGAYWRGNSDNAMMQRIYGTAWFDKKDLKAYLKRLEEAKERDHRKLGKELDLFMISQEVGQGLPFWLPNGATIRRELERYIVDKEVAAGYQHVYTPPIASVELYKTSGHWDHYREDMFPPMDMGDGEEFVLRPMNCPHHIEVYKHHVHSYRELPIRIAEIGMMHRYEKSGALTGLQRVREMSLNDGHTFVAPEQIEEEFKKILQLIIDVYEDFNLTDYRFRLSYRDPADKHKYFDNDEMWENAQRMLKAAVDDMGVEYYEAEGEAAFYGPKLDIQVKTALGKEETLSTIQLDFLLPERFDLHYIGADGEEHRPVMIHRGVISTMERFTAILIENYKGAFPTWLAPHQVTLIPVSNEKHVDYAWEVAKKLRDRGVRAEVDERNEKMQFKIRASQTQKIPYQLIVGDKEMKDGTVNVRRYGQKQTHTETVSEFVENILADIARKSRPDAE</sequence>
<accession>Q5M5B9</accession>
<reference key="1">
    <citation type="journal article" date="2004" name="Nat. Biotechnol.">
        <title>Complete sequence and comparative genome analysis of the dairy bacterium Streptococcus thermophilus.</title>
        <authorList>
            <person name="Bolotin A."/>
            <person name="Quinquis B."/>
            <person name="Renault P."/>
            <person name="Sorokin A."/>
            <person name="Ehrlich S.D."/>
            <person name="Kulakauskas S."/>
            <person name="Lapidus A."/>
            <person name="Goltsman E."/>
            <person name="Mazur M."/>
            <person name="Pusch G.D."/>
            <person name="Fonstein M."/>
            <person name="Overbeek R."/>
            <person name="Kyprides N."/>
            <person name="Purnelle B."/>
            <person name="Prozzi D."/>
            <person name="Ngui K."/>
            <person name="Masuy D."/>
            <person name="Hancy F."/>
            <person name="Burteau S."/>
            <person name="Boutry M."/>
            <person name="Delcour J."/>
            <person name="Goffeau A."/>
            <person name="Hols P."/>
        </authorList>
    </citation>
    <scope>NUCLEOTIDE SEQUENCE [LARGE SCALE GENOMIC DNA]</scope>
    <source>
        <strain>ATCC BAA-250 / LMG 18311</strain>
    </source>
</reference>
<feature type="chain" id="PRO_0000101067" description="Threonine--tRNA ligase">
    <location>
        <begin position="1"/>
        <end position="648"/>
    </location>
</feature>
<feature type="domain" description="TGS" evidence="2">
    <location>
        <begin position="1"/>
        <end position="61"/>
    </location>
</feature>
<feature type="region of interest" description="Catalytic" evidence="1">
    <location>
        <begin position="242"/>
        <end position="540"/>
    </location>
</feature>
<feature type="binding site" evidence="1">
    <location>
        <position position="336"/>
    </location>
    <ligand>
        <name>Zn(2+)</name>
        <dbReference type="ChEBI" id="CHEBI:29105"/>
    </ligand>
</feature>
<feature type="binding site" evidence="1">
    <location>
        <position position="387"/>
    </location>
    <ligand>
        <name>Zn(2+)</name>
        <dbReference type="ChEBI" id="CHEBI:29105"/>
    </ligand>
</feature>
<feature type="binding site" evidence="1">
    <location>
        <position position="517"/>
    </location>
    <ligand>
        <name>Zn(2+)</name>
        <dbReference type="ChEBI" id="CHEBI:29105"/>
    </ligand>
</feature>
<protein>
    <recommendedName>
        <fullName evidence="1">Threonine--tRNA ligase</fullName>
        <ecNumber evidence="1">6.1.1.3</ecNumber>
    </recommendedName>
    <alternativeName>
        <fullName evidence="1">Threonyl-tRNA synthetase</fullName>
        <shortName evidence="1">ThrRS</shortName>
    </alternativeName>
</protein>
<name>SYT_STRT2</name>
<dbReference type="EC" id="6.1.1.3" evidence="1"/>
<dbReference type="EMBL" id="CP000023">
    <property type="protein sequence ID" value="AAV60278.1"/>
    <property type="molecule type" value="Genomic_DNA"/>
</dbReference>
<dbReference type="RefSeq" id="WP_002950123.1">
    <property type="nucleotide sequence ID" value="NC_006448.1"/>
</dbReference>
<dbReference type="SMR" id="Q5M5B9"/>
<dbReference type="STRING" id="264199.stu0572"/>
<dbReference type="GeneID" id="66898473"/>
<dbReference type="KEGG" id="stl:stu0572"/>
<dbReference type="eggNOG" id="COG0441">
    <property type="taxonomic scope" value="Bacteria"/>
</dbReference>
<dbReference type="HOGENOM" id="CLU_008554_0_1_9"/>
<dbReference type="Proteomes" id="UP000001170">
    <property type="component" value="Chromosome"/>
</dbReference>
<dbReference type="GO" id="GO:0005737">
    <property type="term" value="C:cytoplasm"/>
    <property type="evidence" value="ECO:0007669"/>
    <property type="project" value="UniProtKB-SubCell"/>
</dbReference>
<dbReference type="GO" id="GO:0005524">
    <property type="term" value="F:ATP binding"/>
    <property type="evidence" value="ECO:0007669"/>
    <property type="project" value="UniProtKB-UniRule"/>
</dbReference>
<dbReference type="GO" id="GO:0140096">
    <property type="term" value="F:catalytic activity, acting on a protein"/>
    <property type="evidence" value="ECO:0007669"/>
    <property type="project" value="UniProtKB-ARBA"/>
</dbReference>
<dbReference type="GO" id="GO:0046872">
    <property type="term" value="F:metal ion binding"/>
    <property type="evidence" value="ECO:0007669"/>
    <property type="project" value="UniProtKB-KW"/>
</dbReference>
<dbReference type="GO" id="GO:0004829">
    <property type="term" value="F:threonine-tRNA ligase activity"/>
    <property type="evidence" value="ECO:0007669"/>
    <property type="project" value="UniProtKB-UniRule"/>
</dbReference>
<dbReference type="GO" id="GO:0016740">
    <property type="term" value="F:transferase activity"/>
    <property type="evidence" value="ECO:0007669"/>
    <property type="project" value="UniProtKB-ARBA"/>
</dbReference>
<dbReference type="GO" id="GO:0000049">
    <property type="term" value="F:tRNA binding"/>
    <property type="evidence" value="ECO:0007669"/>
    <property type="project" value="UniProtKB-KW"/>
</dbReference>
<dbReference type="GO" id="GO:0006435">
    <property type="term" value="P:threonyl-tRNA aminoacylation"/>
    <property type="evidence" value="ECO:0007669"/>
    <property type="project" value="UniProtKB-UniRule"/>
</dbReference>
<dbReference type="CDD" id="cd01667">
    <property type="entry name" value="TGS_ThrRS"/>
    <property type="match status" value="1"/>
</dbReference>
<dbReference type="CDD" id="cd00860">
    <property type="entry name" value="ThrRS_anticodon"/>
    <property type="match status" value="1"/>
</dbReference>
<dbReference type="CDD" id="cd00771">
    <property type="entry name" value="ThrRS_core"/>
    <property type="match status" value="1"/>
</dbReference>
<dbReference type="FunFam" id="3.10.20.30:FF:000005">
    <property type="entry name" value="Threonine--tRNA ligase"/>
    <property type="match status" value="1"/>
</dbReference>
<dbReference type="FunFam" id="3.30.54.20:FF:000002">
    <property type="entry name" value="Threonine--tRNA ligase"/>
    <property type="match status" value="1"/>
</dbReference>
<dbReference type="FunFam" id="3.30.930.10:FF:000002">
    <property type="entry name" value="Threonine--tRNA ligase"/>
    <property type="match status" value="1"/>
</dbReference>
<dbReference type="FunFam" id="3.40.50.800:FF:000001">
    <property type="entry name" value="Threonine--tRNA ligase"/>
    <property type="match status" value="1"/>
</dbReference>
<dbReference type="FunFam" id="3.30.980.10:FF:000005">
    <property type="entry name" value="Threonyl-tRNA synthetase, mitochondrial"/>
    <property type="match status" value="1"/>
</dbReference>
<dbReference type="Gene3D" id="3.10.20.30">
    <property type="match status" value="1"/>
</dbReference>
<dbReference type="Gene3D" id="3.30.54.20">
    <property type="match status" value="1"/>
</dbReference>
<dbReference type="Gene3D" id="3.40.50.800">
    <property type="entry name" value="Anticodon-binding domain"/>
    <property type="match status" value="1"/>
</dbReference>
<dbReference type="Gene3D" id="3.30.930.10">
    <property type="entry name" value="Bira Bifunctional Protein, Domain 2"/>
    <property type="match status" value="1"/>
</dbReference>
<dbReference type="Gene3D" id="3.30.980.10">
    <property type="entry name" value="Threonyl-trna Synthetase, Chain A, domain 2"/>
    <property type="match status" value="1"/>
</dbReference>
<dbReference type="HAMAP" id="MF_00184">
    <property type="entry name" value="Thr_tRNA_synth"/>
    <property type="match status" value="1"/>
</dbReference>
<dbReference type="InterPro" id="IPR002314">
    <property type="entry name" value="aa-tRNA-synt_IIb"/>
</dbReference>
<dbReference type="InterPro" id="IPR006195">
    <property type="entry name" value="aa-tRNA-synth_II"/>
</dbReference>
<dbReference type="InterPro" id="IPR045864">
    <property type="entry name" value="aa-tRNA-synth_II/BPL/LPL"/>
</dbReference>
<dbReference type="InterPro" id="IPR004154">
    <property type="entry name" value="Anticodon-bd"/>
</dbReference>
<dbReference type="InterPro" id="IPR036621">
    <property type="entry name" value="Anticodon-bd_dom_sf"/>
</dbReference>
<dbReference type="InterPro" id="IPR012675">
    <property type="entry name" value="Beta-grasp_dom_sf"/>
</dbReference>
<dbReference type="InterPro" id="IPR004095">
    <property type="entry name" value="TGS"/>
</dbReference>
<dbReference type="InterPro" id="IPR012676">
    <property type="entry name" value="TGS-like"/>
</dbReference>
<dbReference type="InterPro" id="IPR002320">
    <property type="entry name" value="Thr-tRNA-ligase_IIa"/>
</dbReference>
<dbReference type="InterPro" id="IPR018163">
    <property type="entry name" value="Thr/Ala-tRNA-synth_IIc_edit"/>
</dbReference>
<dbReference type="InterPro" id="IPR047246">
    <property type="entry name" value="ThrRS_anticodon"/>
</dbReference>
<dbReference type="InterPro" id="IPR033728">
    <property type="entry name" value="ThrRS_core"/>
</dbReference>
<dbReference type="InterPro" id="IPR012947">
    <property type="entry name" value="tRNA_SAD"/>
</dbReference>
<dbReference type="NCBIfam" id="TIGR00418">
    <property type="entry name" value="thrS"/>
    <property type="match status" value="1"/>
</dbReference>
<dbReference type="PANTHER" id="PTHR11451:SF56">
    <property type="entry name" value="THREONINE--TRNA LIGASE 1"/>
    <property type="match status" value="1"/>
</dbReference>
<dbReference type="PANTHER" id="PTHR11451">
    <property type="entry name" value="THREONINE-TRNA LIGASE"/>
    <property type="match status" value="1"/>
</dbReference>
<dbReference type="Pfam" id="PF03129">
    <property type="entry name" value="HGTP_anticodon"/>
    <property type="match status" value="1"/>
</dbReference>
<dbReference type="Pfam" id="PF02824">
    <property type="entry name" value="TGS"/>
    <property type="match status" value="1"/>
</dbReference>
<dbReference type="Pfam" id="PF00587">
    <property type="entry name" value="tRNA-synt_2b"/>
    <property type="match status" value="1"/>
</dbReference>
<dbReference type="Pfam" id="PF07973">
    <property type="entry name" value="tRNA_SAD"/>
    <property type="match status" value="1"/>
</dbReference>
<dbReference type="PRINTS" id="PR01047">
    <property type="entry name" value="TRNASYNTHTHR"/>
</dbReference>
<dbReference type="SMART" id="SM00863">
    <property type="entry name" value="tRNA_SAD"/>
    <property type="match status" value="1"/>
</dbReference>
<dbReference type="SUPFAM" id="SSF52954">
    <property type="entry name" value="Class II aaRS ABD-related"/>
    <property type="match status" value="1"/>
</dbReference>
<dbReference type="SUPFAM" id="SSF55681">
    <property type="entry name" value="Class II aaRS and biotin synthetases"/>
    <property type="match status" value="1"/>
</dbReference>
<dbReference type="SUPFAM" id="SSF81271">
    <property type="entry name" value="TGS-like"/>
    <property type="match status" value="1"/>
</dbReference>
<dbReference type="SUPFAM" id="SSF55186">
    <property type="entry name" value="ThrRS/AlaRS common domain"/>
    <property type="match status" value="1"/>
</dbReference>
<dbReference type="PROSITE" id="PS50862">
    <property type="entry name" value="AA_TRNA_LIGASE_II"/>
    <property type="match status" value="1"/>
</dbReference>
<dbReference type="PROSITE" id="PS51880">
    <property type="entry name" value="TGS"/>
    <property type="match status" value="1"/>
</dbReference>